<keyword id="KW-0025">Alternative splicing</keyword>
<keyword id="KW-1185">Reference proteome</keyword>
<keyword id="KW-0833">Ubl conjugation pathway</keyword>
<sequence>MELHEISKLDNKKHPERIVESKMKKRMKPYSLTSLNNLDDGCLMHILSFLSPIPDRYNTALVCHRWRYLACHPRLWLRVDRFVKDLSQPGVFLNIESAVSAARPGDTILIVAGGNYRVSNIQIKKPLCLVGGGEIPDETTLVCARGSDSALELLSTCKLANLTVKAELGCCLLHRSGRLTIDGCVLQCETNPLDHLSCPIVSTAGDEDIENILSHVEVKETVTGKIKANSVTVLQTRIEGGAKAVSTRGDLVLQRVRVMYSKAYLYFWFDVDYE</sequence>
<reference key="1">
    <citation type="submission" date="2001-02" db="EMBL/GenBank/DDBJ databases">
        <title>Transcription of the UMP synthase locus.</title>
        <authorList>
            <person name="Kafer C.W."/>
            <person name="Thornburg R.W."/>
        </authorList>
    </citation>
    <scope>NUCLEOTIDE SEQUENCE [MRNA] (ISOFORMS 1 AND 2)</scope>
</reference>
<reference key="2">
    <citation type="journal article" date="2000" name="Nature">
        <title>Sequence and analysis of chromosome 3 of the plant Arabidopsis thaliana.</title>
        <authorList>
            <person name="Salanoubat M."/>
            <person name="Lemcke K."/>
            <person name="Rieger M."/>
            <person name="Ansorge W."/>
            <person name="Unseld M."/>
            <person name="Fartmann B."/>
            <person name="Valle G."/>
            <person name="Bloecker H."/>
            <person name="Perez-Alonso M."/>
            <person name="Obermaier B."/>
            <person name="Delseny M."/>
            <person name="Boutry M."/>
            <person name="Grivell L.A."/>
            <person name="Mache R."/>
            <person name="Puigdomenech P."/>
            <person name="De Simone V."/>
            <person name="Choisne N."/>
            <person name="Artiguenave F."/>
            <person name="Robert C."/>
            <person name="Brottier P."/>
            <person name="Wincker P."/>
            <person name="Cattolico L."/>
            <person name="Weissenbach J."/>
            <person name="Saurin W."/>
            <person name="Quetier F."/>
            <person name="Schaefer M."/>
            <person name="Mueller-Auer S."/>
            <person name="Gabel C."/>
            <person name="Fuchs M."/>
            <person name="Benes V."/>
            <person name="Wurmbach E."/>
            <person name="Drzonek H."/>
            <person name="Erfle H."/>
            <person name="Jordan N."/>
            <person name="Bangert S."/>
            <person name="Wiedelmann R."/>
            <person name="Kranz H."/>
            <person name="Voss H."/>
            <person name="Holland R."/>
            <person name="Brandt P."/>
            <person name="Nyakatura G."/>
            <person name="Vezzi A."/>
            <person name="D'Angelo M."/>
            <person name="Pallavicini A."/>
            <person name="Toppo S."/>
            <person name="Simionati B."/>
            <person name="Conrad A."/>
            <person name="Hornischer K."/>
            <person name="Kauer G."/>
            <person name="Loehnert T.-H."/>
            <person name="Nordsiek G."/>
            <person name="Reichelt J."/>
            <person name="Scharfe M."/>
            <person name="Schoen O."/>
            <person name="Bargues M."/>
            <person name="Terol J."/>
            <person name="Climent J."/>
            <person name="Navarro P."/>
            <person name="Collado C."/>
            <person name="Perez-Perez A."/>
            <person name="Ottenwaelder B."/>
            <person name="Duchemin D."/>
            <person name="Cooke R."/>
            <person name="Laudie M."/>
            <person name="Berger-Llauro C."/>
            <person name="Purnelle B."/>
            <person name="Masuy D."/>
            <person name="de Haan M."/>
            <person name="Maarse A.C."/>
            <person name="Alcaraz J.-P."/>
            <person name="Cottet A."/>
            <person name="Casacuberta E."/>
            <person name="Monfort A."/>
            <person name="Argiriou A."/>
            <person name="Flores M."/>
            <person name="Liguori R."/>
            <person name="Vitale D."/>
            <person name="Mannhaupt G."/>
            <person name="Haase D."/>
            <person name="Schoof H."/>
            <person name="Rudd S."/>
            <person name="Zaccaria P."/>
            <person name="Mewes H.-W."/>
            <person name="Mayer K.F.X."/>
            <person name="Kaul S."/>
            <person name="Town C.D."/>
            <person name="Koo H.L."/>
            <person name="Tallon L.J."/>
            <person name="Jenkins J."/>
            <person name="Rooney T."/>
            <person name="Rizzo M."/>
            <person name="Walts A."/>
            <person name="Utterback T."/>
            <person name="Fujii C.Y."/>
            <person name="Shea T.P."/>
            <person name="Creasy T.H."/>
            <person name="Haas B."/>
            <person name="Maiti R."/>
            <person name="Wu D."/>
            <person name="Peterson J."/>
            <person name="Van Aken S."/>
            <person name="Pai G."/>
            <person name="Militscher J."/>
            <person name="Sellers P."/>
            <person name="Gill J.E."/>
            <person name="Feldblyum T.V."/>
            <person name="Preuss D."/>
            <person name="Lin X."/>
            <person name="Nierman W.C."/>
            <person name="Salzberg S.L."/>
            <person name="White O."/>
            <person name="Venter J.C."/>
            <person name="Fraser C.M."/>
            <person name="Kaneko T."/>
            <person name="Nakamura Y."/>
            <person name="Sato S."/>
            <person name="Kato T."/>
            <person name="Asamizu E."/>
            <person name="Sasamoto S."/>
            <person name="Kimura T."/>
            <person name="Idesawa K."/>
            <person name="Kawashima K."/>
            <person name="Kishida Y."/>
            <person name="Kiyokawa C."/>
            <person name="Kohara M."/>
            <person name="Matsumoto M."/>
            <person name="Matsuno A."/>
            <person name="Muraki A."/>
            <person name="Nakayama S."/>
            <person name="Nakazaki N."/>
            <person name="Shinpo S."/>
            <person name="Takeuchi C."/>
            <person name="Wada T."/>
            <person name="Watanabe A."/>
            <person name="Yamada M."/>
            <person name="Yasuda M."/>
            <person name="Tabata S."/>
        </authorList>
    </citation>
    <scope>NUCLEOTIDE SEQUENCE [LARGE SCALE GENOMIC DNA]</scope>
    <source>
        <strain>cv. Columbia</strain>
    </source>
</reference>
<reference key="3">
    <citation type="journal article" date="2017" name="Plant J.">
        <title>Araport11: a complete reannotation of the Arabidopsis thaliana reference genome.</title>
        <authorList>
            <person name="Cheng C.Y."/>
            <person name="Krishnakumar V."/>
            <person name="Chan A.P."/>
            <person name="Thibaud-Nissen F."/>
            <person name="Schobel S."/>
            <person name="Town C.D."/>
        </authorList>
    </citation>
    <scope>GENOME REANNOTATION</scope>
    <source>
        <strain>cv. Columbia</strain>
    </source>
</reference>
<reference key="4">
    <citation type="journal article" date="2003" name="Science">
        <title>Empirical analysis of transcriptional activity in the Arabidopsis genome.</title>
        <authorList>
            <person name="Yamada K."/>
            <person name="Lim J."/>
            <person name="Dale J.M."/>
            <person name="Chen H."/>
            <person name="Shinn P."/>
            <person name="Palm C.J."/>
            <person name="Southwick A.M."/>
            <person name="Wu H.C."/>
            <person name="Kim C.J."/>
            <person name="Nguyen M."/>
            <person name="Pham P.K."/>
            <person name="Cheuk R.F."/>
            <person name="Karlin-Newmann G."/>
            <person name="Liu S.X."/>
            <person name="Lam B."/>
            <person name="Sakano H."/>
            <person name="Wu T."/>
            <person name="Yu G."/>
            <person name="Miranda M."/>
            <person name="Quach H.L."/>
            <person name="Tripp M."/>
            <person name="Chang C.H."/>
            <person name="Lee J.M."/>
            <person name="Toriumi M.J."/>
            <person name="Chan M.M."/>
            <person name="Tang C.C."/>
            <person name="Onodera C.S."/>
            <person name="Deng J.M."/>
            <person name="Akiyama K."/>
            <person name="Ansari Y."/>
            <person name="Arakawa T."/>
            <person name="Banh J."/>
            <person name="Banno F."/>
            <person name="Bowser L."/>
            <person name="Brooks S.Y."/>
            <person name="Carninci P."/>
            <person name="Chao Q."/>
            <person name="Choy N."/>
            <person name="Enju A."/>
            <person name="Goldsmith A.D."/>
            <person name="Gurjal M."/>
            <person name="Hansen N.F."/>
            <person name="Hayashizaki Y."/>
            <person name="Johnson-Hopson C."/>
            <person name="Hsuan V.W."/>
            <person name="Iida K."/>
            <person name="Karnes M."/>
            <person name="Khan S."/>
            <person name="Koesema E."/>
            <person name="Ishida J."/>
            <person name="Jiang P.X."/>
            <person name="Jones T."/>
            <person name="Kawai J."/>
            <person name="Kamiya A."/>
            <person name="Meyers C."/>
            <person name="Nakajima M."/>
            <person name="Narusaka M."/>
            <person name="Seki M."/>
            <person name="Sakurai T."/>
            <person name="Satou M."/>
            <person name="Tamse R."/>
            <person name="Vaysberg M."/>
            <person name="Wallender E.K."/>
            <person name="Wong C."/>
            <person name="Yamamura Y."/>
            <person name="Yuan S."/>
            <person name="Shinozaki K."/>
            <person name="Davis R.W."/>
            <person name="Theologis A."/>
            <person name="Ecker J.R."/>
        </authorList>
    </citation>
    <scope>NUCLEOTIDE SEQUENCE [LARGE SCALE MRNA] (ISOFORMS 1 AND 2)</scope>
    <source>
        <strain>cv. Columbia</strain>
    </source>
</reference>
<reference key="5">
    <citation type="submission" date="2006-07" db="EMBL/GenBank/DDBJ databases">
        <title>Large-scale analysis of RIKEN Arabidopsis full-length (RAFL) cDNAs.</title>
        <authorList>
            <person name="Totoki Y."/>
            <person name="Seki M."/>
            <person name="Ishida J."/>
            <person name="Nakajima M."/>
            <person name="Enju A."/>
            <person name="Kamiya A."/>
            <person name="Narusaka M."/>
            <person name="Shin-i T."/>
            <person name="Nakagawa M."/>
            <person name="Sakamoto N."/>
            <person name="Oishi K."/>
            <person name="Kohara Y."/>
            <person name="Kobayashi M."/>
            <person name="Toyoda A."/>
            <person name="Sakaki Y."/>
            <person name="Sakurai T."/>
            <person name="Iida K."/>
            <person name="Akiyama K."/>
            <person name="Satou M."/>
            <person name="Toyoda T."/>
            <person name="Konagaya A."/>
            <person name="Carninci P."/>
            <person name="Kawai J."/>
            <person name="Hayashizaki Y."/>
            <person name="Shinozaki K."/>
        </authorList>
    </citation>
    <scope>NUCLEOTIDE SEQUENCE [LARGE SCALE MRNA] (ISOFORM 1)</scope>
    <source>
        <strain>cv. Columbia</strain>
    </source>
</reference>
<reference key="6">
    <citation type="submission" date="2002-03" db="EMBL/GenBank/DDBJ databases">
        <title>Full-length cDNA from Arabidopsis thaliana.</title>
        <authorList>
            <person name="Brover V.V."/>
            <person name="Troukhan M.E."/>
            <person name="Alexandrov N.A."/>
            <person name="Lu Y.-P."/>
            <person name="Flavell R.B."/>
            <person name="Feldmann K.A."/>
        </authorList>
    </citation>
    <scope>NUCLEOTIDE SEQUENCE [LARGE SCALE MRNA] (ISOFORM 1)</scope>
</reference>
<reference key="7">
    <citation type="journal article" date="2001" name="EMBO J.">
        <title>SKP1-SnRK protein kinase interactions mediate proteasomal binding of a plant SCF ubiquitin ligase.</title>
        <authorList>
            <person name="Farras R."/>
            <person name="Ferrando A."/>
            <person name="Jasik J."/>
            <person name="Kleinow T."/>
            <person name="Oekresz L."/>
            <person name="Tiburcio A."/>
            <person name="Salchert K."/>
            <person name="del Pozo C."/>
            <person name="Schell J."/>
            <person name="Koncz C."/>
        </authorList>
    </citation>
    <scope>NUCLEOTIDE SEQUENCE [MRNA] OF 14-274 (ISOFORM 1)</scope>
    <scope>INTERACTION WITH SKP1A/ASK1</scope>
</reference>
<reference key="8">
    <citation type="submission" date="2000-06" db="EMBL/GenBank/DDBJ databases">
        <title>Transcriptional analysis of the Arabidopsis thaliana UMP synthase locus.</title>
        <authorList>
            <person name="Kafer C.W."/>
            <person name="Thornburg R.W."/>
        </authorList>
    </citation>
    <scope>NUCLEOTIDE SEQUENCE [GENOMIC DNA / MRNA] OF 181-274 (ISOFORM 1)</scope>
    <source>
        <strain>cv. Columbia</strain>
    </source>
</reference>
<organism>
    <name type="scientific">Arabidopsis thaliana</name>
    <name type="common">Mouse-ear cress</name>
    <dbReference type="NCBI Taxonomy" id="3702"/>
    <lineage>
        <taxon>Eukaryota</taxon>
        <taxon>Viridiplantae</taxon>
        <taxon>Streptophyta</taxon>
        <taxon>Embryophyta</taxon>
        <taxon>Tracheophyta</taxon>
        <taxon>Spermatophyta</taxon>
        <taxon>Magnoliopsida</taxon>
        <taxon>eudicotyledons</taxon>
        <taxon>Gunneridae</taxon>
        <taxon>Pentapetalae</taxon>
        <taxon>rosids</taxon>
        <taxon>malvids</taxon>
        <taxon>Brassicales</taxon>
        <taxon>Brassicaceae</taxon>
        <taxon>Camelineae</taxon>
        <taxon>Arabidopsis</taxon>
    </lineage>
</organism>
<dbReference type="EMBL" id="AF347971">
    <property type="protein sequence ID" value="AAK61344.1"/>
    <property type="molecule type" value="mRNA"/>
</dbReference>
<dbReference type="EMBL" id="AF347972">
    <property type="protein sequence ID" value="AAK61345.1"/>
    <property type="molecule type" value="mRNA"/>
</dbReference>
<dbReference type="EMBL" id="AL138656">
    <property type="protein sequence ID" value="CAB77568.1"/>
    <property type="status" value="ALT_SEQ"/>
    <property type="molecule type" value="Genomic_DNA"/>
</dbReference>
<dbReference type="EMBL" id="CP002686">
    <property type="protein sequence ID" value="AEE79236.1"/>
    <property type="molecule type" value="Genomic_DNA"/>
</dbReference>
<dbReference type="EMBL" id="CP002686">
    <property type="protein sequence ID" value="ANM64173.1"/>
    <property type="molecule type" value="Genomic_DNA"/>
</dbReference>
<dbReference type="EMBL" id="CP002686">
    <property type="protein sequence ID" value="ANM64176.1"/>
    <property type="molecule type" value="Genomic_DNA"/>
</dbReference>
<dbReference type="EMBL" id="CP002686">
    <property type="protein sequence ID" value="ANM64177.1"/>
    <property type="molecule type" value="Genomic_DNA"/>
</dbReference>
<dbReference type="EMBL" id="AF325053">
    <property type="protein sequence ID" value="AAG40405.1"/>
    <property type="molecule type" value="mRNA"/>
</dbReference>
<dbReference type="EMBL" id="BT005863">
    <property type="protein sequence ID" value="AAO64798.1"/>
    <property type="molecule type" value="mRNA"/>
</dbReference>
<dbReference type="EMBL" id="AK227454">
    <property type="protein sequence ID" value="BAE99457.1"/>
    <property type="molecule type" value="mRNA"/>
</dbReference>
<dbReference type="EMBL" id="AY085042">
    <property type="protein sequence ID" value="AAM61599.1"/>
    <property type="molecule type" value="mRNA"/>
</dbReference>
<dbReference type="EMBL" id="AF263381">
    <property type="protein sequence ID" value="AAG21980.1"/>
    <property type="status" value="ALT_INIT"/>
    <property type="molecule type" value="mRNA"/>
</dbReference>
<dbReference type="EMBL" id="AF276887">
    <property type="protein sequence ID" value="AAK69441.1"/>
    <property type="molecule type" value="Genomic_DNA"/>
</dbReference>
<dbReference type="EMBL" id="AF276888">
    <property type="protein sequence ID" value="AAG01324.1"/>
    <property type="molecule type" value="mRNA"/>
</dbReference>
<dbReference type="PIR" id="T47607">
    <property type="entry name" value="T47607"/>
</dbReference>
<dbReference type="RefSeq" id="NP_001326219.1">
    <molecule id="Q94FT2-2"/>
    <property type="nucleotide sequence ID" value="NM_001339667.1"/>
</dbReference>
<dbReference type="RefSeq" id="NP_001326222.1">
    <molecule id="Q94FT2-1"/>
    <property type="nucleotide sequence ID" value="NM_001339669.1"/>
</dbReference>
<dbReference type="RefSeq" id="NP_001326223.1">
    <molecule id="Q94FT2-2"/>
    <property type="nucleotide sequence ID" value="NM_001339668.1"/>
</dbReference>
<dbReference type="RefSeq" id="NP_566999.1">
    <molecule id="Q94FT2-1"/>
    <property type="nucleotide sequence ID" value="NM_115304.3"/>
</dbReference>
<dbReference type="SMR" id="Q94FT2"/>
<dbReference type="BioGRID" id="9929">
    <property type="interactions" value="7"/>
</dbReference>
<dbReference type="FunCoup" id="Q94FT2">
    <property type="interactions" value="2411"/>
</dbReference>
<dbReference type="STRING" id="3702.Q94FT2"/>
<dbReference type="PaxDb" id="3702-AT3G54480.1"/>
<dbReference type="ProteomicsDB" id="232593">
    <molecule id="Q94FT2-1"/>
</dbReference>
<dbReference type="EnsemblPlants" id="AT3G54480.1">
    <molecule id="Q94FT2-1"/>
    <property type="protein sequence ID" value="AT3G54480.1"/>
    <property type="gene ID" value="AT3G54480"/>
</dbReference>
<dbReference type="EnsemblPlants" id="AT3G54480.3">
    <molecule id="Q94FT2-2"/>
    <property type="protein sequence ID" value="AT3G54480.3"/>
    <property type="gene ID" value="AT3G54480"/>
</dbReference>
<dbReference type="EnsemblPlants" id="AT3G54480.4">
    <molecule id="Q94FT2-2"/>
    <property type="protein sequence ID" value="AT3G54480.4"/>
    <property type="gene ID" value="AT3G54480"/>
</dbReference>
<dbReference type="EnsemblPlants" id="AT3G54480.5">
    <molecule id="Q94FT2-1"/>
    <property type="protein sequence ID" value="AT3G54480.5"/>
    <property type="gene ID" value="AT3G54480"/>
</dbReference>
<dbReference type="GeneID" id="824613"/>
<dbReference type="Gramene" id="AT3G54480.1">
    <molecule id="Q94FT2-1"/>
    <property type="protein sequence ID" value="AT3G54480.1"/>
    <property type="gene ID" value="AT3G54480"/>
</dbReference>
<dbReference type="Gramene" id="AT3G54480.3">
    <molecule id="Q94FT2-2"/>
    <property type="protein sequence ID" value="AT3G54480.3"/>
    <property type="gene ID" value="AT3G54480"/>
</dbReference>
<dbReference type="Gramene" id="AT3G54480.4">
    <molecule id="Q94FT2-2"/>
    <property type="protein sequence ID" value="AT3G54480.4"/>
    <property type="gene ID" value="AT3G54480"/>
</dbReference>
<dbReference type="Gramene" id="AT3G54480.5">
    <molecule id="Q94FT2-1"/>
    <property type="protein sequence ID" value="AT3G54480.5"/>
    <property type="gene ID" value="AT3G54480"/>
</dbReference>
<dbReference type="KEGG" id="ath:AT3G54480"/>
<dbReference type="Araport" id="AT3G54480"/>
<dbReference type="TAIR" id="AT3G54480">
    <property type="gene designation" value="SKIP5"/>
</dbReference>
<dbReference type="eggNOG" id="ENOG502QPSM">
    <property type="taxonomic scope" value="Eukaryota"/>
</dbReference>
<dbReference type="HOGENOM" id="CLU_082924_0_0_1"/>
<dbReference type="InParanoid" id="Q94FT2"/>
<dbReference type="OMA" id="FLSTCKV"/>
<dbReference type="OrthoDB" id="549243at2759"/>
<dbReference type="PhylomeDB" id="Q94FT2"/>
<dbReference type="UniPathway" id="UPA00143"/>
<dbReference type="PRO" id="PR:Q94FT2"/>
<dbReference type="Proteomes" id="UP000006548">
    <property type="component" value="Chromosome 3"/>
</dbReference>
<dbReference type="ExpressionAtlas" id="Q94FT2">
    <property type="expression patterns" value="baseline and differential"/>
</dbReference>
<dbReference type="GO" id="GO:0016567">
    <property type="term" value="P:protein ubiquitination"/>
    <property type="evidence" value="ECO:0007669"/>
    <property type="project" value="UniProtKB-UniPathway"/>
</dbReference>
<dbReference type="CDD" id="cd22163">
    <property type="entry name" value="F-box_AtSKIP5-like"/>
    <property type="match status" value="1"/>
</dbReference>
<dbReference type="Gene3D" id="1.20.1280.50">
    <property type="match status" value="1"/>
</dbReference>
<dbReference type="InterPro" id="IPR036047">
    <property type="entry name" value="F-box-like_dom_sf"/>
</dbReference>
<dbReference type="InterPro" id="IPR001810">
    <property type="entry name" value="F-box_dom"/>
</dbReference>
<dbReference type="InterPro" id="IPR011050">
    <property type="entry name" value="Pectin_lyase_fold/virulence"/>
</dbReference>
<dbReference type="InterPro" id="IPR045140">
    <property type="entry name" value="SHCBP1-like"/>
</dbReference>
<dbReference type="PANTHER" id="PTHR14695:SF4">
    <property type="entry name" value="PROTEIN NESSUN DORMA"/>
    <property type="match status" value="1"/>
</dbReference>
<dbReference type="PANTHER" id="PTHR14695">
    <property type="entry name" value="SHC SH2-DOMAIN BINDING PROTEIN 1-RELATED"/>
    <property type="match status" value="1"/>
</dbReference>
<dbReference type="Pfam" id="PF12937">
    <property type="entry name" value="F-box-like"/>
    <property type="match status" value="1"/>
</dbReference>
<dbReference type="SMART" id="SM00256">
    <property type="entry name" value="FBOX"/>
    <property type="match status" value="1"/>
</dbReference>
<dbReference type="SUPFAM" id="SSF81383">
    <property type="entry name" value="F-box domain"/>
    <property type="match status" value="1"/>
</dbReference>
<dbReference type="SUPFAM" id="SSF51126">
    <property type="entry name" value="Pectin lyase-like"/>
    <property type="match status" value="1"/>
</dbReference>
<feature type="chain" id="PRO_0000272227" description="F-box protein SKIP5">
    <location>
        <begin position="1"/>
        <end position="274"/>
    </location>
</feature>
<feature type="domain" description="F-box">
    <location>
        <begin position="32"/>
        <end position="79"/>
    </location>
</feature>
<feature type="splice variant" id="VSP_022371" description="In isoform 3." evidence="5">
    <original>GDTILIVAGGNYRV</original>
    <variation>VILSVTLFTLLCYS</variation>
    <location>
        <begin position="105"/>
        <end position="118"/>
    </location>
</feature>
<feature type="splice variant" id="VSP_022372" description="In isoform 3." evidence="5">
    <location>
        <begin position="119"/>
        <end position="274"/>
    </location>
</feature>
<feature type="splice variant" id="VSP_022373" description="In isoform 2." evidence="3 4">
    <original>SALELLST</original>
    <variation>RFGTHIPS</variation>
    <location>
        <begin position="149"/>
        <end position="156"/>
    </location>
</feature>
<feature type="splice variant" id="VSP_022374" description="In isoform 2." evidence="3 4">
    <location>
        <begin position="157"/>
        <end position="274"/>
    </location>
</feature>
<feature type="sequence conflict" description="In Ref. 8; AAG01324/AAK69441." evidence="5" ref="8">
    <original>C</original>
    <variation>Y</variation>
    <location>
        <position position="198"/>
    </location>
</feature>
<gene>
    <name type="primary">SKIP5</name>
    <name type="ordered locus">At3g54480</name>
    <name type="ORF">T14E10.50</name>
</gene>
<proteinExistence type="evidence at protein level"/>
<accession>Q94FT2</accession>
<accession>A0A1I9LNL9</accession>
<accession>Q3E7R9</accession>
<accession>Q9FPG4</accession>
<accession>Q9FV00</accession>
<accession>Q9FYV5</accession>
<accession>Q9M1H9</accession>
<comment type="pathway">
    <text>Protein modification; protein ubiquitination.</text>
</comment>
<comment type="subunit">
    <text evidence="1 2">Part of a SCF (SKP1-cullin-F-box) protein ligase complex (By similarity). Interacts with SKP1A/ASK1.</text>
</comment>
<comment type="alternative products">
    <event type="alternative splicing"/>
    <isoform>
        <id>Q94FT2-1</id>
        <name>1</name>
        <sequence type="displayed"/>
    </isoform>
    <isoform>
        <id>Q94FT2-2</id>
        <name>2</name>
        <sequence type="described" ref="VSP_022373 VSP_022374"/>
    </isoform>
    <isoform>
        <id>Q94FT2-3</id>
        <name>3</name>
        <sequence type="described" ref="VSP_022371 VSP_022372"/>
    </isoform>
</comment>
<comment type="sequence caution" evidence="5">
    <conflict type="erroneous initiation">
        <sequence resource="EMBL-CDS" id="AAG21980"/>
    </conflict>
</comment>
<comment type="sequence caution" evidence="5">
    <conflict type="erroneous gene model prediction">
        <sequence resource="EMBL-CDS" id="CAB77568"/>
    </conflict>
</comment>
<name>SKIP5_ARATH</name>
<protein>
    <recommendedName>
        <fullName>F-box protein SKIP5</fullName>
    </recommendedName>
    <alternativeName>
        <fullName>SKP1-interacting partner 5</fullName>
    </alternativeName>
</protein>
<evidence type="ECO:0000250" key="1"/>
<evidence type="ECO:0000269" key="2">
    <source>
    </source>
</evidence>
<evidence type="ECO:0000303" key="3">
    <source>
    </source>
</evidence>
<evidence type="ECO:0000303" key="4">
    <source ref="1"/>
</evidence>
<evidence type="ECO:0000305" key="5"/>